<proteinExistence type="inferred from homology"/>
<gene>
    <name evidence="1" type="primary">lpxC</name>
    <name type="ordered locus">ECS88_0100</name>
</gene>
<keyword id="KW-0378">Hydrolase</keyword>
<keyword id="KW-0441">Lipid A biosynthesis</keyword>
<keyword id="KW-0444">Lipid biosynthesis</keyword>
<keyword id="KW-0443">Lipid metabolism</keyword>
<keyword id="KW-0479">Metal-binding</keyword>
<keyword id="KW-1185">Reference proteome</keyword>
<keyword id="KW-0862">Zinc</keyword>
<name>LPXC_ECO45</name>
<sequence>MIKQRTLKCIVQATGVGLHTGKKVTLTLRPAPANTGVIYRRTDLNPPVDFPADAKSVRDTMLCTCLVNEHDVRISTVEHLNAALAGLGIDNIVIEVNAPEIPIMDGSAAPFVYLLLDAGIDELNCAKKFVRIKETVRVEDGDKWAEFKPYNGFSLDFTIDFNHPAIDSSNQRYAMNFSADAFMRQISRARTFGFMRDIEYLQSRGLCLGGSFDCAIVVDDYRVLNEDGLRFEDEFVRHKMLDAIGDLFMCGHNIIGAFTAYKSGHALNNKLLQAVLAKQEAWEYVTFQDDAELPLAFKAPSAVLA</sequence>
<dbReference type="EC" id="3.5.1.108" evidence="1"/>
<dbReference type="EMBL" id="CU928161">
    <property type="protein sequence ID" value="CAR01465.1"/>
    <property type="molecule type" value="Genomic_DNA"/>
</dbReference>
<dbReference type="RefSeq" id="WP_000595470.1">
    <property type="nucleotide sequence ID" value="NC_011742.1"/>
</dbReference>
<dbReference type="SMR" id="B7MAL9"/>
<dbReference type="KEGG" id="ecz:ECS88_0100"/>
<dbReference type="HOGENOM" id="CLU_046528_1_0_6"/>
<dbReference type="UniPathway" id="UPA00359">
    <property type="reaction ID" value="UER00478"/>
</dbReference>
<dbReference type="Proteomes" id="UP000000747">
    <property type="component" value="Chromosome"/>
</dbReference>
<dbReference type="GO" id="GO:0016020">
    <property type="term" value="C:membrane"/>
    <property type="evidence" value="ECO:0007669"/>
    <property type="project" value="GOC"/>
</dbReference>
<dbReference type="GO" id="GO:0046872">
    <property type="term" value="F:metal ion binding"/>
    <property type="evidence" value="ECO:0007669"/>
    <property type="project" value="UniProtKB-KW"/>
</dbReference>
<dbReference type="GO" id="GO:0103117">
    <property type="term" value="F:UDP-3-O-acyl-N-acetylglucosamine deacetylase activity"/>
    <property type="evidence" value="ECO:0007669"/>
    <property type="project" value="UniProtKB-UniRule"/>
</dbReference>
<dbReference type="GO" id="GO:0009245">
    <property type="term" value="P:lipid A biosynthetic process"/>
    <property type="evidence" value="ECO:0007669"/>
    <property type="project" value="UniProtKB-UniRule"/>
</dbReference>
<dbReference type="FunFam" id="3.30.1700.10:FF:000001">
    <property type="entry name" value="UDP-3-O-acyl-N-acetylglucosamine deacetylase"/>
    <property type="match status" value="1"/>
</dbReference>
<dbReference type="FunFam" id="3.30.230.20:FF:000001">
    <property type="entry name" value="UDP-3-O-acyl-N-acetylglucosamine deacetylase"/>
    <property type="match status" value="1"/>
</dbReference>
<dbReference type="Gene3D" id="3.30.230.20">
    <property type="entry name" value="lpxc deacetylase, domain 1"/>
    <property type="match status" value="1"/>
</dbReference>
<dbReference type="Gene3D" id="3.30.1700.10">
    <property type="entry name" value="lpxc deacetylase, domain 2"/>
    <property type="match status" value="1"/>
</dbReference>
<dbReference type="HAMAP" id="MF_00388">
    <property type="entry name" value="LpxC"/>
    <property type="match status" value="1"/>
</dbReference>
<dbReference type="InterPro" id="IPR020568">
    <property type="entry name" value="Ribosomal_Su5_D2-typ_SF"/>
</dbReference>
<dbReference type="InterPro" id="IPR004463">
    <property type="entry name" value="UDP-acyl_GlcNac_deAcase"/>
</dbReference>
<dbReference type="InterPro" id="IPR011334">
    <property type="entry name" value="UDP-acyl_GlcNac_deAcase_C"/>
</dbReference>
<dbReference type="InterPro" id="IPR015870">
    <property type="entry name" value="UDP-acyl_N-AcGlcN_deAcase_N"/>
</dbReference>
<dbReference type="NCBIfam" id="TIGR00325">
    <property type="entry name" value="lpxC"/>
    <property type="match status" value="1"/>
</dbReference>
<dbReference type="PANTHER" id="PTHR33694">
    <property type="entry name" value="UDP-3-O-ACYL-N-ACETYLGLUCOSAMINE DEACETYLASE 1, MITOCHONDRIAL-RELATED"/>
    <property type="match status" value="1"/>
</dbReference>
<dbReference type="PANTHER" id="PTHR33694:SF1">
    <property type="entry name" value="UDP-3-O-ACYL-N-ACETYLGLUCOSAMINE DEACETYLASE 1, MITOCHONDRIAL-RELATED"/>
    <property type="match status" value="1"/>
</dbReference>
<dbReference type="Pfam" id="PF03331">
    <property type="entry name" value="LpxC"/>
    <property type="match status" value="1"/>
</dbReference>
<dbReference type="SUPFAM" id="SSF54211">
    <property type="entry name" value="Ribosomal protein S5 domain 2-like"/>
    <property type="match status" value="2"/>
</dbReference>
<evidence type="ECO:0000255" key="1">
    <source>
        <dbReference type="HAMAP-Rule" id="MF_00388"/>
    </source>
</evidence>
<organism>
    <name type="scientific">Escherichia coli O45:K1 (strain S88 / ExPEC)</name>
    <dbReference type="NCBI Taxonomy" id="585035"/>
    <lineage>
        <taxon>Bacteria</taxon>
        <taxon>Pseudomonadati</taxon>
        <taxon>Pseudomonadota</taxon>
        <taxon>Gammaproteobacteria</taxon>
        <taxon>Enterobacterales</taxon>
        <taxon>Enterobacteriaceae</taxon>
        <taxon>Escherichia</taxon>
    </lineage>
</organism>
<reference key="1">
    <citation type="journal article" date="2009" name="PLoS Genet.">
        <title>Organised genome dynamics in the Escherichia coli species results in highly diverse adaptive paths.</title>
        <authorList>
            <person name="Touchon M."/>
            <person name="Hoede C."/>
            <person name="Tenaillon O."/>
            <person name="Barbe V."/>
            <person name="Baeriswyl S."/>
            <person name="Bidet P."/>
            <person name="Bingen E."/>
            <person name="Bonacorsi S."/>
            <person name="Bouchier C."/>
            <person name="Bouvet O."/>
            <person name="Calteau A."/>
            <person name="Chiapello H."/>
            <person name="Clermont O."/>
            <person name="Cruveiller S."/>
            <person name="Danchin A."/>
            <person name="Diard M."/>
            <person name="Dossat C."/>
            <person name="Karoui M.E."/>
            <person name="Frapy E."/>
            <person name="Garry L."/>
            <person name="Ghigo J.M."/>
            <person name="Gilles A.M."/>
            <person name="Johnson J."/>
            <person name="Le Bouguenec C."/>
            <person name="Lescat M."/>
            <person name="Mangenot S."/>
            <person name="Martinez-Jehanne V."/>
            <person name="Matic I."/>
            <person name="Nassif X."/>
            <person name="Oztas S."/>
            <person name="Petit M.A."/>
            <person name="Pichon C."/>
            <person name="Rouy Z."/>
            <person name="Ruf C.S."/>
            <person name="Schneider D."/>
            <person name="Tourret J."/>
            <person name="Vacherie B."/>
            <person name="Vallenet D."/>
            <person name="Medigue C."/>
            <person name="Rocha E.P.C."/>
            <person name="Denamur E."/>
        </authorList>
    </citation>
    <scope>NUCLEOTIDE SEQUENCE [LARGE SCALE GENOMIC DNA]</scope>
    <source>
        <strain>S88 / ExPEC</strain>
    </source>
</reference>
<protein>
    <recommendedName>
        <fullName evidence="1">UDP-3-O-acyl-N-acetylglucosamine deacetylase</fullName>
        <shortName evidence="1">UDP-3-O-acyl-GlcNAc deacetylase</shortName>
        <ecNumber evidence="1">3.5.1.108</ecNumber>
    </recommendedName>
    <alternativeName>
        <fullName evidence="1">UDP-3-O-[R-3-hydroxymyristoyl]-N-acetylglucosamine deacetylase</fullName>
    </alternativeName>
</protein>
<accession>B7MAL9</accession>
<feature type="chain" id="PRO_1000122779" description="UDP-3-O-acyl-N-acetylglucosamine deacetylase">
    <location>
        <begin position="1"/>
        <end position="305"/>
    </location>
</feature>
<feature type="active site" description="Proton donor" evidence="1">
    <location>
        <position position="265"/>
    </location>
</feature>
<feature type="binding site" evidence="1">
    <location>
        <position position="79"/>
    </location>
    <ligand>
        <name>Zn(2+)</name>
        <dbReference type="ChEBI" id="CHEBI:29105"/>
    </ligand>
</feature>
<feature type="binding site" evidence="1">
    <location>
        <position position="238"/>
    </location>
    <ligand>
        <name>Zn(2+)</name>
        <dbReference type="ChEBI" id="CHEBI:29105"/>
    </ligand>
</feature>
<feature type="binding site" evidence="1">
    <location>
        <position position="242"/>
    </location>
    <ligand>
        <name>Zn(2+)</name>
        <dbReference type="ChEBI" id="CHEBI:29105"/>
    </ligand>
</feature>
<comment type="function">
    <text evidence="1">Catalyzes the hydrolysis of UDP-3-O-myristoyl-N-acetylglucosamine to form UDP-3-O-myristoylglucosamine and acetate, the committed step in lipid A biosynthesis.</text>
</comment>
<comment type="catalytic activity">
    <reaction evidence="1">
        <text>a UDP-3-O-[(3R)-3-hydroxyacyl]-N-acetyl-alpha-D-glucosamine + H2O = a UDP-3-O-[(3R)-3-hydroxyacyl]-alpha-D-glucosamine + acetate</text>
        <dbReference type="Rhea" id="RHEA:67816"/>
        <dbReference type="ChEBI" id="CHEBI:15377"/>
        <dbReference type="ChEBI" id="CHEBI:30089"/>
        <dbReference type="ChEBI" id="CHEBI:137740"/>
        <dbReference type="ChEBI" id="CHEBI:173225"/>
        <dbReference type="EC" id="3.5.1.108"/>
    </reaction>
</comment>
<comment type="cofactor">
    <cofactor evidence="1">
        <name>Zn(2+)</name>
        <dbReference type="ChEBI" id="CHEBI:29105"/>
    </cofactor>
</comment>
<comment type="pathway">
    <text evidence="1">Glycolipid biosynthesis; lipid IV(A) biosynthesis; lipid IV(A) from (3R)-3-hydroxytetradecanoyl-[acyl-carrier-protein] and UDP-N-acetyl-alpha-D-glucosamine: step 2/6.</text>
</comment>
<comment type="similarity">
    <text evidence="1">Belongs to the LpxC family.</text>
</comment>